<protein>
    <recommendedName>
        <fullName evidence="1">Small ribosomal subunit protein uS15</fullName>
    </recommendedName>
    <alternativeName>
        <fullName evidence="3">30S ribosomal protein S15</fullName>
    </alternativeName>
</protein>
<comment type="function">
    <text evidence="1">One of the primary rRNA binding proteins, it binds directly to 16S rRNA where it helps nucleate assembly of the platform of the 30S subunit by binding and bridging several RNA helices of the 16S rRNA.</text>
</comment>
<comment type="function">
    <text evidence="1">Forms an intersubunit bridge (bridge B4) with the 23S rRNA of the 50S subunit in the ribosome.</text>
</comment>
<comment type="subunit">
    <text evidence="1">Part of the 30S ribosomal subunit. Forms a bridge to the 50S subunit in the 70S ribosome, contacting the 23S rRNA.</text>
</comment>
<comment type="similarity">
    <text evidence="1">Belongs to the universal ribosomal protein uS15 family.</text>
</comment>
<accession>Q1QS61</accession>
<reference key="1">
    <citation type="submission" date="2006-03" db="EMBL/GenBank/DDBJ databases">
        <title>Complete sequence of chromosome of Nitrobacter hamburgensis X14.</title>
        <authorList>
            <consortium name="US DOE Joint Genome Institute"/>
            <person name="Copeland A."/>
            <person name="Lucas S."/>
            <person name="Lapidus A."/>
            <person name="Barry K."/>
            <person name="Detter J.C."/>
            <person name="Glavina del Rio T."/>
            <person name="Hammon N."/>
            <person name="Israni S."/>
            <person name="Dalin E."/>
            <person name="Tice H."/>
            <person name="Pitluck S."/>
            <person name="Chain P."/>
            <person name="Malfatti S."/>
            <person name="Shin M."/>
            <person name="Vergez L."/>
            <person name="Schmutz J."/>
            <person name="Larimer F."/>
            <person name="Land M."/>
            <person name="Hauser L."/>
            <person name="Kyrpides N."/>
            <person name="Ivanova N."/>
            <person name="Ward B."/>
            <person name="Arp D."/>
            <person name="Klotz M."/>
            <person name="Stein L."/>
            <person name="O'Mullan G."/>
            <person name="Starkenburg S."/>
            <person name="Sayavedra L."/>
            <person name="Poret-Peterson A.T."/>
            <person name="Gentry M.E."/>
            <person name="Bruce D."/>
            <person name="Richardson P."/>
        </authorList>
    </citation>
    <scope>NUCLEOTIDE SEQUENCE [LARGE SCALE GENOMIC DNA]</scope>
    <source>
        <strain>DSM 10229 / NCIMB 13809 / X14</strain>
    </source>
</reference>
<gene>
    <name evidence="1" type="primary">rpsO</name>
    <name type="ordered locus">Nham_0034</name>
</gene>
<sequence length="89" mass="10238">MSITAERKAEVIKTNARKSGDTGSPEVQVAILSERIVNLTNHFKSHGKDNHSRRGLLKLVSTRRSLLDYVKKKDEARYRALLEKHNIRR</sequence>
<proteinExistence type="inferred from homology"/>
<keyword id="KW-1185">Reference proteome</keyword>
<keyword id="KW-0687">Ribonucleoprotein</keyword>
<keyword id="KW-0689">Ribosomal protein</keyword>
<keyword id="KW-0694">RNA-binding</keyword>
<keyword id="KW-0699">rRNA-binding</keyword>
<name>RS15_NITHX</name>
<evidence type="ECO:0000255" key="1">
    <source>
        <dbReference type="HAMAP-Rule" id="MF_01343"/>
    </source>
</evidence>
<evidence type="ECO:0000256" key="2">
    <source>
        <dbReference type="SAM" id="MobiDB-lite"/>
    </source>
</evidence>
<evidence type="ECO:0000305" key="3"/>
<organism>
    <name type="scientific">Nitrobacter hamburgensis (strain DSM 10229 / NCIMB 13809 / X14)</name>
    <dbReference type="NCBI Taxonomy" id="323097"/>
    <lineage>
        <taxon>Bacteria</taxon>
        <taxon>Pseudomonadati</taxon>
        <taxon>Pseudomonadota</taxon>
        <taxon>Alphaproteobacteria</taxon>
        <taxon>Hyphomicrobiales</taxon>
        <taxon>Nitrobacteraceae</taxon>
        <taxon>Nitrobacter</taxon>
    </lineage>
</organism>
<feature type="chain" id="PRO_0000255510" description="Small ribosomal subunit protein uS15">
    <location>
        <begin position="1"/>
        <end position="89"/>
    </location>
</feature>
<feature type="region of interest" description="Disordered" evidence="2">
    <location>
        <begin position="1"/>
        <end position="25"/>
    </location>
</feature>
<feature type="compositionally biased region" description="Basic and acidic residues" evidence="2">
    <location>
        <begin position="1"/>
        <end position="11"/>
    </location>
</feature>
<dbReference type="EMBL" id="CP000319">
    <property type="protein sequence ID" value="ABE60936.1"/>
    <property type="molecule type" value="Genomic_DNA"/>
</dbReference>
<dbReference type="RefSeq" id="WP_011508643.1">
    <property type="nucleotide sequence ID" value="NC_007964.1"/>
</dbReference>
<dbReference type="SMR" id="Q1QS61"/>
<dbReference type="STRING" id="323097.Nham_0034"/>
<dbReference type="KEGG" id="nha:Nham_0034"/>
<dbReference type="eggNOG" id="COG0184">
    <property type="taxonomic scope" value="Bacteria"/>
</dbReference>
<dbReference type="HOGENOM" id="CLU_148518_0_0_5"/>
<dbReference type="OrthoDB" id="9799262at2"/>
<dbReference type="Proteomes" id="UP000001953">
    <property type="component" value="Chromosome"/>
</dbReference>
<dbReference type="GO" id="GO:0022627">
    <property type="term" value="C:cytosolic small ribosomal subunit"/>
    <property type="evidence" value="ECO:0007669"/>
    <property type="project" value="TreeGrafter"/>
</dbReference>
<dbReference type="GO" id="GO:0019843">
    <property type="term" value="F:rRNA binding"/>
    <property type="evidence" value="ECO:0007669"/>
    <property type="project" value="UniProtKB-UniRule"/>
</dbReference>
<dbReference type="GO" id="GO:0003735">
    <property type="term" value="F:structural constituent of ribosome"/>
    <property type="evidence" value="ECO:0007669"/>
    <property type="project" value="InterPro"/>
</dbReference>
<dbReference type="GO" id="GO:0006412">
    <property type="term" value="P:translation"/>
    <property type="evidence" value="ECO:0007669"/>
    <property type="project" value="UniProtKB-UniRule"/>
</dbReference>
<dbReference type="CDD" id="cd00353">
    <property type="entry name" value="Ribosomal_S15p_S13e"/>
    <property type="match status" value="1"/>
</dbReference>
<dbReference type="FunFam" id="1.10.287.10:FF:000002">
    <property type="entry name" value="30S ribosomal protein S15"/>
    <property type="match status" value="1"/>
</dbReference>
<dbReference type="Gene3D" id="6.10.250.3130">
    <property type="match status" value="1"/>
</dbReference>
<dbReference type="Gene3D" id="1.10.287.10">
    <property type="entry name" value="S15/NS1, RNA-binding"/>
    <property type="match status" value="1"/>
</dbReference>
<dbReference type="HAMAP" id="MF_01343_B">
    <property type="entry name" value="Ribosomal_uS15_B"/>
    <property type="match status" value="1"/>
</dbReference>
<dbReference type="InterPro" id="IPR000589">
    <property type="entry name" value="Ribosomal_uS15"/>
</dbReference>
<dbReference type="InterPro" id="IPR005290">
    <property type="entry name" value="Ribosomal_uS15_bac-type"/>
</dbReference>
<dbReference type="InterPro" id="IPR009068">
    <property type="entry name" value="uS15_NS1_RNA-bd_sf"/>
</dbReference>
<dbReference type="NCBIfam" id="TIGR00952">
    <property type="entry name" value="S15_bact"/>
    <property type="match status" value="1"/>
</dbReference>
<dbReference type="PANTHER" id="PTHR23321">
    <property type="entry name" value="RIBOSOMAL PROTEIN S15, BACTERIAL AND ORGANELLAR"/>
    <property type="match status" value="1"/>
</dbReference>
<dbReference type="PANTHER" id="PTHR23321:SF26">
    <property type="entry name" value="SMALL RIBOSOMAL SUBUNIT PROTEIN US15M"/>
    <property type="match status" value="1"/>
</dbReference>
<dbReference type="Pfam" id="PF00312">
    <property type="entry name" value="Ribosomal_S15"/>
    <property type="match status" value="1"/>
</dbReference>
<dbReference type="SMART" id="SM01387">
    <property type="entry name" value="Ribosomal_S15"/>
    <property type="match status" value="1"/>
</dbReference>
<dbReference type="SUPFAM" id="SSF47060">
    <property type="entry name" value="S15/NS1 RNA-binding domain"/>
    <property type="match status" value="1"/>
</dbReference>
<dbReference type="PROSITE" id="PS00362">
    <property type="entry name" value="RIBOSOMAL_S15"/>
    <property type="match status" value="1"/>
</dbReference>